<keyword id="KW-0963">Cytoplasm</keyword>
<keyword id="KW-0328">Glycosyltransferase</keyword>
<keyword id="KW-0660">Purine salvage</keyword>
<keyword id="KW-1185">Reference proteome</keyword>
<keyword id="KW-0808">Transferase</keyword>
<dbReference type="EC" id="2.4.2.7" evidence="1"/>
<dbReference type="EMBL" id="CP000141">
    <property type="protein sequence ID" value="ABB14678.1"/>
    <property type="molecule type" value="Genomic_DNA"/>
</dbReference>
<dbReference type="RefSeq" id="WP_011344919.1">
    <property type="nucleotide sequence ID" value="NC_007503.1"/>
</dbReference>
<dbReference type="SMR" id="Q3AAI8"/>
<dbReference type="FunCoup" id="Q3AAI8">
    <property type="interactions" value="308"/>
</dbReference>
<dbReference type="STRING" id="246194.CHY_2027"/>
<dbReference type="KEGG" id="chy:CHY_2027"/>
<dbReference type="eggNOG" id="COG0503">
    <property type="taxonomic scope" value="Bacteria"/>
</dbReference>
<dbReference type="HOGENOM" id="CLU_063339_3_0_9"/>
<dbReference type="InParanoid" id="Q3AAI8"/>
<dbReference type="OrthoDB" id="9803963at2"/>
<dbReference type="UniPathway" id="UPA00588">
    <property type="reaction ID" value="UER00646"/>
</dbReference>
<dbReference type="Proteomes" id="UP000002706">
    <property type="component" value="Chromosome"/>
</dbReference>
<dbReference type="GO" id="GO:0005737">
    <property type="term" value="C:cytoplasm"/>
    <property type="evidence" value="ECO:0007669"/>
    <property type="project" value="UniProtKB-SubCell"/>
</dbReference>
<dbReference type="GO" id="GO:0002055">
    <property type="term" value="F:adenine binding"/>
    <property type="evidence" value="ECO:0007669"/>
    <property type="project" value="TreeGrafter"/>
</dbReference>
<dbReference type="GO" id="GO:0003999">
    <property type="term" value="F:adenine phosphoribosyltransferase activity"/>
    <property type="evidence" value="ECO:0007669"/>
    <property type="project" value="UniProtKB-UniRule"/>
</dbReference>
<dbReference type="GO" id="GO:0016208">
    <property type="term" value="F:AMP binding"/>
    <property type="evidence" value="ECO:0007669"/>
    <property type="project" value="TreeGrafter"/>
</dbReference>
<dbReference type="GO" id="GO:0006168">
    <property type="term" value="P:adenine salvage"/>
    <property type="evidence" value="ECO:0007669"/>
    <property type="project" value="InterPro"/>
</dbReference>
<dbReference type="GO" id="GO:0044209">
    <property type="term" value="P:AMP salvage"/>
    <property type="evidence" value="ECO:0007669"/>
    <property type="project" value="UniProtKB-UniRule"/>
</dbReference>
<dbReference type="GO" id="GO:0006166">
    <property type="term" value="P:purine ribonucleoside salvage"/>
    <property type="evidence" value="ECO:0007669"/>
    <property type="project" value="UniProtKB-KW"/>
</dbReference>
<dbReference type="CDD" id="cd06223">
    <property type="entry name" value="PRTases_typeI"/>
    <property type="match status" value="1"/>
</dbReference>
<dbReference type="FunFam" id="3.40.50.2020:FF:000004">
    <property type="entry name" value="Adenine phosphoribosyltransferase"/>
    <property type="match status" value="1"/>
</dbReference>
<dbReference type="Gene3D" id="3.40.50.2020">
    <property type="match status" value="1"/>
</dbReference>
<dbReference type="HAMAP" id="MF_00004">
    <property type="entry name" value="Aden_phosphoribosyltr"/>
    <property type="match status" value="1"/>
</dbReference>
<dbReference type="InterPro" id="IPR005764">
    <property type="entry name" value="Ade_phspho_trans"/>
</dbReference>
<dbReference type="InterPro" id="IPR000836">
    <property type="entry name" value="PRibTrfase_dom"/>
</dbReference>
<dbReference type="InterPro" id="IPR029057">
    <property type="entry name" value="PRTase-like"/>
</dbReference>
<dbReference type="InterPro" id="IPR050054">
    <property type="entry name" value="UPRTase/APRTase"/>
</dbReference>
<dbReference type="NCBIfam" id="TIGR01090">
    <property type="entry name" value="apt"/>
    <property type="match status" value="1"/>
</dbReference>
<dbReference type="NCBIfam" id="NF002633">
    <property type="entry name" value="PRK02304.1-2"/>
    <property type="match status" value="1"/>
</dbReference>
<dbReference type="NCBIfam" id="NF002634">
    <property type="entry name" value="PRK02304.1-3"/>
    <property type="match status" value="1"/>
</dbReference>
<dbReference type="NCBIfam" id="NF002636">
    <property type="entry name" value="PRK02304.1-5"/>
    <property type="match status" value="1"/>
</dbReference>
<dbReference type="PANTHER" id="PTHR32315">
    <property type="entry name" value="ADENINE PHOSPHORIBOSYLTRANSFERASE"/>
    <property type="match status" value="1"/>
</dbReference>
<dbReference type="PANTHER" id="PTHR32315:SF3">
    <property type="entry name" value="ADENINE PHOSPHORIBOSYLTRANSFERASE"/>
    <property type="match status" value="1"/>
</dbReference>
<dbReference type="Pfam" id="PF00156">
    <property type="entry name" value="Pribosyltran"/>
    <property type="match status" value="1"/>
</dbReference>
<dbReference type="SUPFAM" id="SSF53271">
    <property type="entry name" value="PRTase-like"/>
    <property type="match status" value="1"/>
</dbReference>
<dbReference type="PROSITE" id="PS00103">
    <property type="entry name" value="PUR_PYR_PR_TRANSFER"/>
    <property type="match status" value="1"/>
</dbReference>
<evidence type="ECO:0000255" key="1">
    <source>
        <dbReference type="HAMAP-Rule" id="MF_00004"/>
    </source>
</evidence>
<comment type="function">
    <text evidence="1">Catalyzes a salvage reaction resulting in the formation of AMP, that is energically less costly than de novo synthesis.</text>
</comment>
<comment type="catalytic activity">
    <reaction evidence="1">
        <text>AMP + diphosphate = 5-phospho-alpha-D-ribose 1-diphosphate + adenine</text>
        <dbReference type="Rhea" id="RHEA:16609"/>
        <dbReference type="ChEBI" id="CHEBI:16708"/>
        <dbReference type="ChEBI" id="CHEBI:33019"/>
        <dbReference type="ChEBI" id="CHEBI:58017"/>
        <dbReference type="ChEBI" id="CHEBI:456215"/>
        <dbReference type="EC" id="2.4.2.7"/>
    </reaction>
</comment>
<comment type="pathway">
    <text evidence="1">Purine metabolism; AMP biosynthesis via salvage pathway; AMP from adenine: step 1/1.</text>
</comment>
<comment type="subunit">
    <text evidence="1">Homodimer.</text>
</comment>
<comment type="subcellular location">
    <subcellularLocation>
        <location evidence="1">Cytoplasm</location>
    </subcellularLocation>
</comment>
<comment type="similarity">
    <text evidence="1">Belongs to the purine/pyrimidine phosphoribosyltransferase family.</text>
</comment>
<protein>
    <recommendedName>
        <fullName evidence="1">Adenine phosphoribosyltransferase</fullName>
        <shortName evidence="1">APRT</shortName>
        <ecNumber evidence="1">2.4.2.7</ecNumber>
    </recommendedName>
</protein>
<reference key="1">
    <citation type="journal article" date="2005" name="PLoS Genet.">
        <title>Life in hot carbon monoxide: the complete genome sequence of Carboxydothermus hydrogenoformans Z-2901.</title>
        <authorList>
            <person name="Wu M."/>
            <person name="Ren Q."/>
            <person name="Durkin A.S."/>
            <person name="Daugherty S.C."/>
            <person name="Brinkac L.M."/>
            <person name="Dodson R.J."/>
            <person name="Madupu R."/>
            <person name="Sullivan S.A."/>
            <person name="Kolonay J.F."/>
            <person name="Nelson W.C."/>
            <person name="Tallon L.J."/>
            <person name="Jones K.M."/>
            <person name="Ulrich L.E."/>
            <person name="Gonzalez J.M."/>
            <person name="Zhulin I.B."/>
            <person name="Robb F.T."/>
            <person name="Eisen J.A."/>
        </authorList>
    </citation>
    <scope>NUCLEOTIDE SEQUENCE [LARGE SCALE GENOMIC DNA]</scope>
    <source>
        <strain>ATCC BAA-161 / DSM 6008 / Z-2901</strain>
    </source>
</reference>
<sequence>MDLKKYIYDIPDFPSPGIIFRDITPLLQNPETFRRTVELLAEKVVDLRPTHVVAIESRGFMFGAPLAYKLGLGFVPVRKEGKLPRESISVSYDLEYGNNTLEIHTDALKPGDRVVIVDDVLATGGTMKATVELCERLGAKVEALLFVIELLALEGRKKLTGKKVISLVQY</sequence>
<gene>
    <name evidence="1" type="primary">apt</name>
    <name type="ordered locus">CHY_2027</name>
</gene>
<organism>
    <name type="scientific">Carboxydothermus hydrogenoformans (strain ATCC BAA-161 / DSM 6008 / Z-2901)</name>
    <dbReference type="NCBI Taxonomy" id="246194"/>
    <lineage>
        <taxon>Bacteria</taxon>
        <taxon>Bacillati</taxon>
        <taxon>Bacillota</taxon>
        <taxon>Clostridia</taxon>
        <taxon>Thermoanaerobacterales</taxon>
        <taxon>Thermoanaerobacteraceae</taxon>
        <taxon>Carboxydothermus</taxon>
    </lineage>
</organism>
<name>APT_CARHZ</name>
<feature type="chain" id="PRO_0000321353" description="Adenine phosphoribosyltransferase">
    <location>
        <begin position="1"/>
        <end position="170"/>
    </location>
</feature>
<accession>Q3AAI8</accession>
<proteinExistence type="inferred from homology"/>